<feature type="chain" id="PRO_0000290901" description="Small ribosomal subunit protein uS8">
    <location>
        <begin position="1"/>
        <end position="133"/>
    </location>
</feature>
<organism>
    <name type="scientific">Prochlorococcus marinus (strain MIT 9515)</name>
    <dbReference type="NCBI Taxonomy" id="167542"/>
    <lineage>
        <taxon>Bacteria</taxon>
        <taxon>Bacillati</taxon>
        <taxon>Cyanobacteriota</taxon>
        <taxon>Cyanophyceae</taxon>
        <taxon>Synechococcales</taxon>
        <taxon>Prochlorococcaceae</taxon>
        <taxon>Prochlorococcus</taxon>
    </lineage>
</organism>
<keyword id="KW-0687">Ribonucleoprotein</keyword>
<keyword id="KW-0689">Ribosomal protein</keyword>
<keyword id="KW-0694">RNA-binding</keyword>
<keyword id="KW-0699">rRNA-binding</keyword>
<dbReference type="EMBL" id="CP000552">
    <property type="protein sequence ID" value="ABM72934.1"/>
    <property type="molecule type" value="Genomic_DNA"/>
</dbReference>
<dbReference type="RefSeq" id="WP_011821025.1">
    <property type="nucleotide sequence ID" value="NC_008817.1"/>
</dbReference>
<dbReference type="SMR" id="A2BYS3"/>
<dbReference type="STRING" id="167542.P9515_17271"/>
<dbReference type="GeneID" id="60202045"/>
<dbReference type="KEGG" id="pmc:P9515_17271"/>
<dbReference type="eggNOG" id="COG0096">
    <property type="taxonomic scope" value="Bacteria"/>
</dbReference>
<dbReference type="HOGENOM" id="CLU_098428_0_0_3"/>
<dbReference type="OrthoDB" id="9802617at2"/>
<dbReference type="Proteomes" id="UP000001589">
    <property type="component" value="Chromosome"/>
</dbReference>
<dbReference type="GO" id="GO:1990904">
    <property type="term" value="C:ribonucleoprotein complex"/>
    <property type="evidence" value="ECO:0007669"/>
    <property type="project" value="UniProtKB-KW"/>
</dbReference>
<dbReference type="GO" id="GO:0005840">
    <property type="term" value="C:ribosome"/>
    <property type="evidence" value="ECO:0007669"/>
    <property type="project" value="UniProtKB-KW"/>
</dbReference>
<dbReference type="GO" id="GO:0019843">
    <property type="term" value="F:rRNA binding"/>
    <property type="evidence" value="ECO:0007669"/>
    <property type="project" value="UniProtKB-UniRule"/>
</dbReference>
<dbReference type="GO" id="GO:0003735">
    <property type="term" value="F:structural constituent of ribosome"/>
    <property type="evidence" value="ECO:0007669"/>
    <property type="project" value="InterPro"/>
</dbReference>
<dbReference type="GO" id="GO:0006412">
    <property type="term" value="P:translation"/>
    <property type="evidence" value="ECO:0007669"/>
    <property type="project" value="UniProtKB-UniRule"/>
</dbReference>
<dbReference type="FunFam" id="3.30.1370.30:FF:000002">
    <property type="entry name" value="30S ribosomal protein S8"/>
    <property type="match status" value="1"/>
</dbReference>
<dbReference type="FunFam" id="3.30.1490.10:FF:000001">
    <property type="entry name" value="30S ribosomal protein S8"/>
    <property type="match status" value="1"/>
</dbReference>
<dbReference type="Gene3D" id="3.30.1370.30">
    <property type="match status" value="1"/>
</dbReference>
<dbReference type="Gene3D" id="3.30.1490.10">
    <property type="match status" value="1"/>
</dbReference>
<dbReference type="HAMAP" id="MF_01302_B">
    <property type="entry name" value="Ribosomal_uS8_B"/>
    <property type="match status" value="1"/>
</dbReference>
<dbReference type="InterPro" id="IPR000630">
    <property type="entry name" value="Ribosomal_uS8"/>
</dbReference>
<dbReference type="InterPro" id="IPR047863">
    <property type="entry name" value="Ribosomal_uS8_CS"/>
</dbReference>
<dbReference type="InterPro" id="IPR035987">
    <property type="entry name" value="Ribosomal_uS8_sf"/>
</dbReference>
<dbReference type="NCBIfam" id="NF001109">
    <property type="entry name" value="PRK00136.1"/>
    <property type="match status" value="1"/>
</dbReference>
<dbReference type="PANTHER" id="PTHR11758">
    <property type="entry name" value="40S RIBOSOMAL PROTEIN S15A"/>
    <property type="match status" value="1"/>
</dbReference>
<dbReference type="Pfam" id="PF00410">
    <property type="entry name" value="Ribosomal_S8"/>
    <property type="match status" value="1"/>
</dbReference>
<dbReference type="SUPFAM" id="SSF56047">
    <property type="entry name" value="Ribosomal protein S8"/>
    <property type="match status" value="1"/>
</dbReference>
<dbReference type="PROSITE" id="PS00053">
    <property type="entry name" value="RIBOSOMAL_S8"/>
    <property type="match status" value="1"/>
</dbReference>
<proteinExistence type="inferred from homology"/>
<accession>A2BYS3</accession>
<protein>
    <recommendedName>
        <fullName evidence="1">Small ribosomal subunit protein uS8</fullName>
    </recommendedName>
    <alternativeName>
        <fullName evidence="2">30S ribosomal protein S8</fullName>
    </alternativeName>
</protein>
<reference key="1">
    <citation type="journal article" date="2007" name="PLoS Genet.">
        <title>Patterns and implications of gene gain and loss in the evolution of Prochlorococcus.</title>
        <authorList>
            <person name="Kettler G.C."/>
            <person name="Martiny A.C."/>
            <person name="Huang K."/>
            <person name="Zucker J."/>
            <person name="Coleman M.L."/>
            <person name="Rodrigue S."/>
            <person name="Chen F."/>
            <person name="Lapidus A."/>
            <person name="Ferriera S."/>
            <person name="Johnson J."/>
            <person name="Steglich C."/>
            <person name="Church G.M."/>
            <person name="Richardson P."/>
            <person name="Chisholm S.W."/>
        </authorList>
    </citation>
    <scope>NUCLEOTIDE SEQUENCE [LARGE SCALE GENOMIC DNA]</scope>
    <source>
        <strain>MIT 9515</strain>
    </source>
</reference>
<gene>
    <name evidence="1" type="primary">rpsH</name>
    <name evidence="1" type="synonym">rps8</name>
    <name type="ordered locus">P9515_17271</name>
</gene>
<evidence type="ECO:0000255" key="1">
    <source>
        <dbReference type="HAMAP-Rule" id="MF_01302"/>
    </source>
</evidence>
<evidence type="ECO:0000305" key="2"/>
<sequence>MSNHDPISDMLTRIRNASQKKHTSTSIPASRMILSIAKVLQKEGFIADINEEGEGYESKIVLGLKYSGKNRFPTIRSMQRVSKPGLRVYKNTKGLPKVLGGLGVAIVSTSKGVMSDRDARKQGIGGEVLCYVY</sequence>
<name>RS8_PROM5</name>
<comment type="function">
    <text evidence="1">One of the primary rRNA binding proteins, it binds directly to 16S rRNA central domain where it helps coordinate assembly of the platform of the 30S subunit.</text>
</comment>
<comment type="subunit">
    <text evidence="1">Part of the 30S ribosomal subunit. Contacts proteins S5 and S12.</text>
</comment>
<comment type="similarity">
    <text evidence="1">Belongs to the universal ribosomal protein uS8 family.</text>
</comment>